<organism>
    <name type="scientific">Flavobacterium psychrophilum (strain ATCC 49511 / DSM 21280 / CIP 103535 / JIP02/86)</name>
    <dbReference type="NCBI Taxonomy" id="402612"/>
    <lineage>
        <taxon>Bacteria</taxon>
        <taxon>Pseudomonadati</taxon>
        <taxon>Bacteroidota</taxon>
        <taxon>Flavobacteriia</taxon>
        <taxon>Flavobacteriales</taxon>
        <taxon>Flavobacteriaceae</taxon>
        <taxon>Flavobacterium</taxon>
    </lineage>
</organism>
<sequence>MIIEPRMRGFICLTAHPTGCEQNIKNQIAYIKSKGHIEGAKRVLVIGASTGFGLASRITSAFGCDASTIGVFFEKPASQGKTASPGWYNSAAFENEAKKAGLYAKSINGDAFSNDVKQQTINLIKKDLGQIDLIIYSLASPVRLHPTTGVLHRSVLKPIGATFTNKTVDFHSGKVSEISIAPCEGDDIENTVTVMGGEDWSMWIDALKKENLLANNATTIAYSYIGPEVTEAVYRKGTIGKAKDHLEATAFSITDSLADLGGKAYVSVNKALVTQASSAIPVIPLYISLLYKIMKSEGIHEGCIEQMQRLYAQRLYTGNEIPTDDKGRIRIDDWEMRADVQEKVAKLWLEATTETLPEIGDLEGYRSDFHNLFGFGFEGVEYKADTNEMVNVSSII</sequence>
<evidence type="ECO:0000255" key="1">
    <source>
        <dbReference type="HAMAP-Rule" id="MF_01838"/>
    </source>
</evidence>
<gene>
    <name evidence="1" type="primary">fabV</name>
    <name type="ordered locus">FP1842</name>
</gene>
<accession>A6H0N4</accession>
<name>FABV_FLAPJ</name>
<keyword id="KW-0275">Fatty acid biosynthesis</keyword>
<keyword id="KW-0276">Fatty acid metabolism</keyword>
<keyword id="KW-0444">Lipid biosynthesis</keyword>
<keyword id="KW-0443">Lipid metabolism</keyword>
<keyword id="KW-0520">NAD</keyword>
<keyword id="KW-0560">Oxidoreductase</keyword>
<keyword id="KW-1185">Reference proteome</keyword>
<dbReference type="EC" id="1.3.1.9" evidence="1"/>
<dbReference type="EMBL" id="AM398681">
    <property type="protein sequence ID" value="CAL43908.1"/>
    <property type="molecule type" value="Genomic_DNA"/>
</dbReference>
<dbReference type="RefSeq" id="WP_011963947.1">
    <property type="nucleotide sequence ID" value="NC_009613.3"/>
</dbReference>
<dbReference type="RefSeq" id="YP_001296711.1">
    <property type="nucleotide sequence ID" value="NC_009613.3"/>
</dbReference>
<dbReference type="SMR" id="A6H0N4"/>
<dbReference type="STRING" id="402612.FP1842"/>
<dbReference type="EnsemblBacteria" id="CAL43908">
    <property type="protein sequence ID" value="CAL43908"/>
    <property type="gene ID" value="FP1842"/>
</dbReference>
<dbReference type="GeneID" id="66551973"/>
<dbReference type="KEGG" id="fps:FP1842"/>
<dbReference type="PATRIC" id="fig|402612.5.peg.1869"/>
<dbReference type="eggNOG" id="COG3007">
    <property type="taxonomic scope" value="Bacteria"/>
</dbReference>
<dbReference type="HOGENOM" id="CLU_057698_1_0_10"/>
<dbReference type="OrthoDB" id="9802260at2"/>
<dbReference type="UniPathway" id="UPA00094"/>
<dbReference type="Proteomes" id="UP000006394">
    <property type="component" value="Chromosome"/>
</dbReference>
<dbReference type="GO" id="GO:0004318">
    <property type="term" value="F:enoyl-[acyl-carrier-protein] reductase (NADH) activity"/>
    <property type="evidence" value="ECO:0007669"/>
    <property type="project" value="UniProtKB-UniRule"/>
</dbReference>
<dbReference type="GO" id="GO:0051287">
    <property type="term" value="F:NAD binding"/>
    <property type="evidence" value="ECO:0007669"/>
    <property type="project" value="UniProtKB-UniRule"/>
</dbReference>
<dbReference type="GO" id="GO:0050343">
    <property type="term" value="F:trans-2-enoyl-CoA reductase (NADH) activity"/>
    <property type="evidence" value="ECO:0007669"/>
    <property type="project" value="TreeGrafter"/>
</dbReference>
<dbReference type="GO" id="GO:0006633">
    <property type="term" value="P:fatty acid biosynthetic process"/>
    <property type="evidence" value="ECO:0007669"/>
    <property type="project" value="UniProtKB-UniRule"/>
</dbReference>
<dbReference type="FunFam" id="3.40.50.720:FF:000221">
    <property type="entry name" value="Enoyl-[acyl-carrier-protein] reductase [NADH]"/>
    <property type="match status" value="1"/>
</dbReference>
<dbReference type="Gene3D" id="3.40.50.720">
    <property type="entry name" value="NAD(P)-binding Rossmann-like Domain"/>
    <property type="match status" value="1"/>
</dbReference>
<dbReference type="HAMAP" id="MF_01838">
    <property type="entry name" value="FabV_reductase"/>
    <property type="match status" value="1"/>
</dbReference>
<dbReference type="InterPro" id="IPR024906">
    <property type="entry name" value="Eno_Rdtase_FAD-bd_dom"/>
</dbReference>
<dbReference type="InterPro" id="IPR024910">
    <property type="entry name" value="Enoyl-CoA_Rdtase_cat_dom"/>
</dbReference>
<dbReference type="InterPro" id="IPR050048">
    <property type="entry name" value="FabV-like_NADH_b"/>
</dbReference>
<dbReference type="InterPro" id="IPR010758">
    <property type="entry name" value="Trans-2-enoyl-CoA_reductase"/>
</dbReference>
<dbReference type="NCBIfam" id="NF043048">
    <property type="entry name" value="EnoyACPredFabV"/>
    <property type="match status" value="1"/>
</dbReference>
<dbReference type="NCBIfam" id="NF010177">
    <property type="entry name" value="PRK13656.1"/>
    <property type="match status" value="1"/>
</dbReference>
<dbReference type="PANTHER" id="PTHR37480">
    <property type="entry name" value="ENOYL-[ACYL-CARRIER-PROTEIN] REDUCTASE [NADH]"/>
    <property type="match status" value="1"/>
</dbReference>
<dbReference type="PANTHER" id="PTHR37480:SF1">
    <property type="entry name" value="ENOYL-[ACYL-CARRIER-PROTEIN] REDUCTASE [NADH]"/>
    <property type="match status" value="1"/>
</dbReference>
<dbReference type="Pfam" id="PF07055">
    <property type="entry name" value="Eno-Rase_FAD_bd"/>
    <property type="match status" value="1"/>
</dbReference>
<dbReference type="Pfam" id="PF12242">
    <property type="entry name" value="Eno-Rase_NADH_b"/>
    <property type="match status" value="1"/>
</dbReference>
<dbReference type="Pfam" id="PF12241">
    <property type="entry name" value="Enoyl_reductase"/>
    <property type="match status" value="1"/>
</dbReference>
<proteinExistence type="inferred from homology"/>
<protein>
    <recommendedName>
        <fullName evidence="1">Enoyl-[acyl-carrier-protein] reductase [NADH]</fullName>
        <shortName evidence="1">ENR</shortName>
        <ecNumber evidence="1">1.3.1.9</ecNumber>
    </recommendedName>
</protein>
<feature type="chain" id="PRO_1000070484" description="Enoyl-[acyl-carrier-protein] reductase [NADH]">
    <location>
        <begin position="1"/>
        <end position="396"/>
    </location>
</feature>
<feature type="active site" description="Proton donor" evidence="1">
    <location>
        <position position="234"/>
    </location>
</feature>
<feature type="binding site" evidence="1">
    <location>
        <begin position="47"/>
        <end position="52"/>
    </location>
    <ligand>
        <name>NAD(+)</name>
        <dbReference type="ChEBI" id="CHEBI:57540"/>
    </ligand>
</feature>
<feature type="binding site" evidence="1">
    <location>
        <begin position="73"/>
        <end position="74"/>
    </location>
    <ligand>
        <name>NAD(+)</name>
        <dbReference type="ChEBI" id="CHEBI:57540"/>
    </ligand>
</feature>
<feature type="binding site" evidence="1">
    <location>
        <begin position="110"/>
        <end position="111"/>
    </location>
    <ligand>
        <name>NAD(+)</name>
        <dbReference type="ChEBI" id="CHEBI:57540"/>
    </ligand>
</feature>
<feature type="binding site" evidence="1">
    <location>
        <begin position="138"/>
        <end position="139"/>
    </location>
    <ligand>
        <name>NAD(+)</name>
        <dbReference type="ChEBI" id="CHEBI:57540"/>
    </ligand>
</feature>
<feature type="binding site" evidence="1">
    <location>
        <position position="224"/>
    </location>
    <ligand>
        <name>substrate</name>
    </ligand>
</feature>
<feature type="binding site" evidence="1">
    <location>
        <position position="243"/>
    </location>
    <ligand>
        <name>NAD(+)</name>
        <dbReference type="ChEBI" id="CHEBI:57540"/>
    </ligand>
</feature>
<feature type="binding site" evidence="1">
    <location>
        <begin position="272"/>
        <end position="274"/>
    </location>
    <ligand>
        <name>NAD(+)</name>
        <dbReference type="ChEBI" id="CHEBI:57540"/>
    </ligand>
</feature>
<feature type="site" description="Plays an important role in discriminating NADH against NADPH" evidence="1">
    <location>
        <position position="74"/>
    </location>
</feature>
<comment type="function">
    <text evidence="1">Involved in the final reduction of the elongation cycle of fatty acid synthesis (FAS II). Catalyzes the reduction of a carbon-carbon double bond in an enoyl moiety that is covalently linked to an acyl carrier protein (ACP).</text>
</comment>
<comment type="catalytic activity">
    <reaction evidence="1">
        <text>a 2,3-saturated acyl-[ACP] + NAD(+) = a (2E)-enoyl-[ACP] + NADH + H(+)</text>
        <dbReference type="Rhea" id="RHEA:10240"/>
        <dbReference type="Rhea" id="RHEA-COMP:9925"/>
        <dbReference type="Rhea" id="RHEA-COMP:9926"/>
        <dbReference type="ChEBI" id="CHEBI:15378"/>
        <dbReference type="ChEBI" id="CHEBI:57540"/>
        <dbReference type="ChEBI" id="CHEBI:57945"/>
        <dbReference type="ChEBI" id="CHEBI:78784"/>
        <dbReference type="ChEBI" id="CHEBI:78785"/>
        <dbReference type="EC" id="1.3.1.9"/>
    </reaction>
</comment>
<comment type="pathway">
    <text evidence="1">Lipid metabolism; fatty acid biosynthesis.</text>
</comment>
<comment type="subunit">
    <text evidence="1">Monomer.</text>
</comment>
<comment type="similarity">
    <text evidence="1">Belongs to the TER reductase family.</text>
</comment>
<reference key="1">
    <citation type="journal article" date="2007" name="Nat. Biotechnol.">
        <title>Complete genome sequence of the fish pathogen Flavobacterium psychrophilum.</title>
        <authorList>
            <person name="Duchaud E."/>
            <person name="Boussaha M."/>
            <person name="Loux V."/>
            <person name="Bernardet J.-F."/>
            <person name="Michel C."/>
            <person name="Kerouault B."/>
            <person name="Mondot S."/>
            <person name="Nicolas P."/>
            <person name="Bossy R."/>
            <person name="Caron C."/>
            <person name="Bessieres P."/>
            <person name="Gibrat J.-F."/>
            <person name="Claverol S."/>
            <person name="Dumetz F."/>
            <person name="Le Henaff M."/>
            <person name="Benmansour A."/>
        </authorList>
    </citation>
    <scope>NUCLEOTIDE SEQUENCE [LARGE SCALE GENOMIC DNA]</scope>
    <source>
        <strain>ATCC 49511 / DSM 21280 / CIP 103535 / JIP02/86</strain>
    </source>
</reference>